<reference key="1">
    <citation type="submission" date="2006-05" db="EMBL/GenBank/DDBJ databases">
        <authorList>
            <consortium name="Genoscope"/>
        </authorList>
    </citation>
    <scope>NUCLEOTIDE SEQUENCE [LARGE SCALE GENOMIC DNA]</scope>
    <source>
        <strain>RCC307</strain>
    </source>
</reference>
<feature type="chain" id="PRO_1000066709" description="Acyl carrier protein">
    <location>
        <begin position="1"/>
        <end position="79"/>
    </location>
</feature>
<feature type="domain" description="Carrier" evidence="2">
    <location>
        <begin position="3"/>
        <end position="78"/>
    </location>
</feature>
<feature type="modified residue" description="O-(pantetheine 4'-phosphoryl)serine" evidence="2">
    <location>
        <position position="38"/>
    </location>
</feature>
<evidence type="ECO:0000255" key="1">
    <source>
        <dbReference type="HAMAP-Rule" id="MF_01217"/>
    </source>
</evidence>
<evidence type="ECO:0000255" key="2">
    <source>
        <dbReference type="PROSITE-ProRule" id="PRU00258"/>
    </source>
</evidence>
<organism>
    <name type="scientific">Synechococcus sp. (strain RCC307)</name>
    <dbReference type="NCBI Taxonomy" id="316278"/>
    <lineage>
        <taxon>Bacteria</taxon>
        <taxon>Bacillati</taxon>
        <taxon>Cyanobacteriota</taxon>
        <taxon>Cyanophyceae</taxon>
        <taxon>Synechococcales</taxon>
        <taxon>Synechococcaceae</taxon>
        <taxon>Synechococcus</taxon>
    </lineage>
</organism>
<dbReference type="EMBL" id="CT978603">
    <property type="protein sequence ID" value="CAK27035.1"/>
    <property type="molecule type" value="Genomic_DNA"/>
</dbReference>
<dbReference type="SMR" id="A5GQ76"/>
<dbReference type="STRING" id="316278.SynRCC307_0132"/>
<dbReference type="KEGG" id="syr:SynRCC307_0132"/>
<dbReference type="eggNOG" id="COG0236">
    <property type="taxonomic scope" value="Bacteria"/>
</dbReference>
<dbReference type="HOGENOM" id="CLU_108696_5_1_3"/>
<dbReference type="OrthoDB" id="9804551at2"/>
<dbReference type="UniPathway" id="UPA00094"/>
<dbReference type="Proteomes" id="UP000001115">
    <property type="component" value="Chromosome"/>
</dbReference>
<dbReference type="GO" id="GO:0005829">
    <property type="term" value="C:cytosol"/>
    <property type="evidence" value="ECO:0007669"/>
    <property type="project" value="TreeGrafter"/>
</dbReference>
<dbReference type="GO" id="GO:0016020">
    <property type="term" value="C:membrane"/>
    <property type="evidence" value="ECO:0007669"/>
    <property type="project" value="GOC"/>
</dbReference>
<dbReference type="GO" id="GO:0000035">
    <property type="term" value="F:acyl binding"/>
    <property type="evidence" value="ECO:0007669"/>
    <property type="project" value="TreeGrafter"/>
</dbReference>
<dbReference type="GO" id="GO:0000036">
    <property type="term" value="F:acyl carrier activity"/>
    <property type="evidence" value="ECO:0007669"/>
    <property type="project" value="UniProtKB-UniRule"/>
</dbReference>
<dbReference type="GO" id="GO:0031177">
    <property type="term" value="F:phosphopantetheine binding"/>
    <property type="evidence" value="ECO:0007669"/>
    <property type="project" value="InterPro"/>
</dbReference>
<dbReference type="GO" id="GO:0009245">
    <property type="term" value="P:lipid A biosynthetic process"/>
    <property type="evidence" value="ECO:0007669"/>
    <property type="project" value="TreeGrafter"/>
</dbReference>
<dbReference type="FunFam" id="1.10.1200.10:FF:000006">
    <property type="entry name" value="Acyl carrier protein"/>
    <property type="match status" value="1"/>
</dbReference>
<dbReference type="Gene3D" id="1.10.1200.10">
    <property type="entry name" value="ACP-like"/>
    <property type="match status" value="1"/>
</dbReference>
<dbReference type="HAMAP" id="MF_01217">
    <property type="entry name" value="Acyl_carrier"/>
    <property type="match status" value="1"/>
</dbReference>
<dbReference type="InterPro" id="IPR003231">
    <property type="entry name" value="ACP"/>
</dbReference>
<dbReference type="InterPro" id="IPR036736">
    <property type="entry name" value="ACP-like_sf"/>
</dbReference>
<dbReference type="InterPro" id="IPR020806">
    <property type="entry name" value="PKS_PP-bd"/>
</dbReference>
<dbReference type="InterPro" id="IPR009081">
    <property type="entry name" value="PP-bd_ACP"/>
</dbReference>
<dbReference type="InterPro" id="IPR006162">
    <property type="entry name" value="Ppantetheine_attach_site"/>
</dbReference>
<dbReference type="NCBIfam" id="TIGR00517">
    <property type="entry name" value="acyl_carrier"/>
    <property type="match status" value="1"/>
</dbReference>
<dbReference type="NCBIfam" id="NF002148">
    <property type="entry name" value="PRK00982.1-2"/>
    <property type="match status" value="1"/>
</dbReference>
<dbReference type="NCBIfam" id="NF002149">
    <property type="entry name" value="PRK00982.1-3"/>
    <property type="match status" value="1"/>
</dbReference>
<dbReference type="NCBIfam" id="NF002150">
    <property type="entry name" value="PRK00982.1-4"/>
    <property type="match status" value="1"/>
</dbReference>
<dbReference type="NCBIfam" id="NF002151">
    <property type="entry name" value="PRK00982.1-5"/>
    <property type="match status" value="1"/>
</dbReference>
<dbReference type="NCBIfam" id="NF009104">
    <property type="entry name" value="PRK12449.1"/>
    <property type="match status" value="1"/>
</dbReference>
<dbReference type="PANTHER" id="PTHR20863">
    <property type="entry name" value="ACYL CARRIER PROTEIN"/>
    <property type="match status" value="1"/>
</dbReference>
<dbReference type="PANTHER" id="PTHR20863:SF76">
    <property type="entry name" value="CARRIER DOMAIN-CONTAINING PROTEIN"/>
    <property type="match status" value="1"/>
</dbReference>
<dbReference type="Pfam" id="PF00550">
    <property type="entry name" value="PP-binding"/>
    <property type="match status" value="1"/>
</dbReference>
<dbReference type="SMART" id="SM00823">
    <property type="entry name" value="PKS_PP"/>
    <property type="match status" value="1"/>
</dbReference>
<dbReference type="SUPFAM" id="SSF47336">
    <property type="entry name" value="ACP-like"/>
    <property type="match status" value="1"/>
</dbReference>
<dbReference type="PROSITE" id="PS50075">
    <property type="entry name" value="CARRIER"/>
    <property type="match status" value="1"/>
</dbReference>
<dbReference type="PROSITE" id="PS00012">
    <property type="entry name" value="PHOSPHOPANTETHEINE"/>
    <property type="match status" value="1"/>
</dbReference>
<protein>
    <recommendedName>
        <fullName evidence="1">Acyl carrier protein</fullName>
        <shortName evidence="1">ACP</shortName>
    </recommendedName>
</protein>
<sequence length="79" mass="8511">MSQEILEKVRSIVAEQLSVDAAEVKPESNFQNDLGADSLDTVELVMALEEAFDIEIPDEAAEGIATVGDAVSYIQEKKG</sequence>
<name>ACP_SYNR3</name>
<accession>A5GQ76</accession>
<keyword id="KW-0963">Cytoplasm</keyword>
<keyword id="KW-0275">Fatty acid biosynthesis</keyword>
<keyword id="KW-0276">Fatty acid metabolism</keyword>
<keyword id="KW-0444">Lipid biosynthesis</keyword>
<keyword id="KW-0443">Lipid metabolism</keyword>
<keyword id="KW-0596">Phosphopantetheine</keyword>
<keyword id="KW-0597">Phosphoprotein</keyword>
<keyword id="KW-1185">Reference proteome</keyword>
<comment type="function">
    <text evidence="1">Carrier of the growing fatty acid chain in fatty acid biosynthesis.</text>
</comment>
<comment type="pathway">
    <text evidence="1">Lipid metabolism; fatty acid biosynthesis.</text>
</comment>
<comment type="subcellular location">
    <subcellularLocation>
        <location evidence="1">Cytoplasm</location>
    </subcellularLocation>
</comment>
<comment type="PTM">
    <text evidence="1">4'-phosphopantetheine is transferred from CoA to a specific serine of apo-ACP by AcpS. This modification is essential for activity because fatty acids are bound in thioester linkage to the sulfhydryl of the prosthetic group.</text>
</comment>
<comment type="similarity">
    <text evidence="1">Belongs to the acyl carrier protein (ACP) family.</text>
</comment>
<proteinExistence type="inferred from homology"/>
<gene>
    <name evidence="1" type="primary">acpP</name>
    <name type="ordered locus">SynRCC307_0132</name>
</gene>